<proteinExistence type="inferred from homology"/>
<sequence>MPSNDVRILLQAAVPAAAVGAVAAVVSAVVAGGKGAVGAVVATVLAMLFMGIGLYVLQRTAKSLPHLFQAMGLMLYAAQILLLFVFLAAFKNTTLFNPRSFAVSLLVVTLAWIAAQTRAHMKAKVLYVEPEPTGEKPEKTGHSS</sequence>
<reference key="1">
    <citation type="journal article" date="2002" name="Nature">
        <title>Complete genome sequence of the model actinomycete Streptomyces coelicolor A3(2).</title>
        <authorList>
            <person name="Bentley S.D."/>
            <person name="Chater K.F."/>
            <person name="Cerdeno-Tarraga A.-M."/>
            <person name="Challis G.L."/>
            <person name="Thomson N.R."/>
            <person name="James K.D."/>
            <person name="Harris D.E."/>
            <person name="Quail M.A."/>
            <person name="Kieser H."/>
            <person name="Harper D."/>
            <person name="Bateman A."/>
            <person name="Brown S."/>
            <person name="Chandra G."/>
            <person name="Chen C.W."/>
            <person name="Collins M."/>
            <person name="Cronin A."/>
            <person name="Fraser A."/>
            <person name="Goble A."/>
            <person name="Hidalgo J."/>
            <person name="Hornsby T."/>
            <person name="Howarth S."/>
            <person name="Huang C.-H."/>
            <person name="Kieser T."/>
            <person name="Larke L."/>
            <person name="Murphy L.D."/>
            <person name="Oliver K."/>
            <person name="O'Neil S."/>
            <person name="Rabbinowitsch E."/>
            <person name="Rajandream M.A."/>
            <person name="Rutherford K.M."/>
            <person name="Rutter S."/>
            <person name="Seeger K."/>
            <person name="Saunders D."/>
            <person name="Sharp S."/>
            <person name="Squares R."/>
            <person name="Squares S."/>
            <person name="Taylor K."/>
            <person name="Warren T."/>
            <person name="Wietzorrek A."/>
            <person name="Woodward J.R."/>
            <person name="Barrell B.G."/>
            <person name="Parkhill J."/>
            <person name="Hopwood D.A."/>
        </authorList>
    </citation>
    <scope>NUCLEOTIDE SEQUENCE [LARGE SCALE GENOMIC DNA]</scope>
    <source>
        <strain>ATCC BAA-471 / A3(2) / M145</strain>
    </source>
</reference>
<comment type="function">
    <text>A possible function for this protein is to guide the assembly of the membrane sector of the ATPase enzyme complex.</text>
</comment>
<comment type="subcellular location">
    <subcellularLocation>
        <location evidence="2">Cell membrane</location>
        <topology evidence="2">Multi-pass membrane protein</topology>
    </subcellularLocation>
</comment>
<comment type="similarity">
    <text evidence="2">Belongs to the bacterial AtpI family.</text>
</comment>
<accession>P0A302</accession>
<accession>P50015</accession>
<keyword id="KW-1003">Cell membrane</keyword>
<keyword id="KW-0138">CF(0)</keyword>
<keyword id="KW-0375">Hydrogen ion transport</keyword>
<keyword id="KW-0406">Ion transport</keyword>
<keyword id="KW-0472">Membrane</keyword>
<keyword id="KW-1185">Reference proteome</keyword>
<keyword id="KW-0812">Transmembrane</keyword>
<keyword id="KW-1133">Transmembrane helix</keyword>
<keyword id="KW-0813">Transport</keyword>
<evidence type="ECO:0000255" key="1"/>
<evidence type="ECO:0000305" key="2"/>
<organism>
    <name type="scientific">Streptomyces coelicolor (strain ATCC BAA-471 / A3(2) / M145)</name>
    <dbReference type="NCBI Taxonomy" id="100226"/>
    <lineage>
        <taxon>Bacteria</taxon>
        <taxon>Bacillati</taxon>
        <taxon>Actinomycetota</taxon>
        <taxon>Actinomycetes</taxon>
        <taxon>Kitasatosporales</taxon>
        <taxon>Streptomycetaceae</taxon>
        <taxon>Streptomyces</taxon>
        <taxon>Streptomyces albidoflavus group</taxon>
    </lineage>
</organism>
<name>ATPZ_STRCO</name>
<feature type="chain" id="PRO_0000071714" description="ATP synthase protein I">
    <location>
        <begin position="1"/>
        <end position="144"/>
    </location>
</feature>
<feature type="transmembrane region" description="Helical" evidence="1">
    <location>
        <begin position="12"/>
        <end position="32"/>
    </location>
</feature>
<feature type="transmembrane region" description="Helical" evidence="1">
    <location>
        <begin position="37"/>
        <end position="57"/>
    </location>
</feature>
<feature type="transmembrane region" description="Helical" evidence="1">
    <location>
        <begin position="70"/>
        <end position="90"/>
    </location>
</feature>
<feature type="transmembrane region" description="Helical" evidence="1">
    <location>
        <begin position="95"/>
        <end position="115"/>
    </location>
</feature>
<dbReference type="EMBL" id="AL939123">
    <property type="protein sequence ID" value="CAB94537.1"/>
    <property type="molecule type" value="Genomic_DNA"/>
</dbReference>
<dbReference type="RefSeq" id="NP_629505.1">
    <property type="nucleotide sequence ID" value="NC_003888.3"/>
</dbReference>
<dbReference type="RefSeq" id="WP_003973631.1">
    <property type="nucleotide sequence ID" value="NZ_VNID01000011.1"/>
</dbReference>
<dbReference type="STRING" id="100226.gene:17763018"/>
<dbReference type="PaxDb" id="100226-SCO5366"/>
<dbReference type="KEGG" id="sco:SCO5366"/>
<dbReference type="PATRIC" id="fig|100226.15.peg.5446"/>
<dbReference type="eggNOG" id="ENOG5032DKN">
    <property type="taxonomic scope" value="Bacteria"/>
</dbReference>
<dbReference type="HOGENOM" id="CLU_124484_0_0_11"/>
<dbReference type="InParanoid" id="P0A302"/>
<dbReference type="OrthoDB" id="3542908at2"/>
<dbReference type="Proteomes" id="UP000001973">
    <property type="component" value="Chromosome"/>
</dbReference>
<dbReference type="GO" id="GO:0005886">
    <property type="term" value="C:plasma membrane"/>
    <property type="evidence" value="ECO:0007669"/>
    <property type="project" value="UniProtKB-SubCell"/>
</dbReference>
<dbReference type="GO" id="GO:0045259">
    <property type="term" value="C:proton-transporting ATP synthase complex"/>
    <property type="evidence" value="ECO:0007669"/>
    <property type="project" value="UniProtKB-KW"/>
</dbReference>
<dbReference type="GO" id="GO:1902600">
    <property type="term" value="P:proton transmembrane transport"/>
    <property type="evidence" value="ECO:0007669"/>
    <property type="project" value="UniProtKB-KW"/>
</dbReference>
<protein>
    <recommendedName>
        <fullName>ATP synthase protein I</fullName>
    </recommendedName>
</protein>
<gene>
    <name type="primary">atpI</name>
    <name type="ordered locus">SCO5366</name>
    <name type="ORF">2SC6G5.10</name>
</gene>